<sequence length="165" mass="17369">MNYKGKAHKVGEHIDTDAIIPARFLVTTDAQKLGENCMSGLEPSWASRVAPGDIMVAGRNFGCGSSREHAPIAILGAGMPVVIGHSFARIFYRNAFNMGLLLMEVGDEVDKISDGDALEIDASTGAIRNLTTGAEITCPPLPASMAAILAKGGLVGYVKERLAQV</sequence>
<reference key="1">
    <citation type="submission" date="2009-01" db="EMBL/GenBank/DDBJ databases">
        <title>Complete sequence of Desulfovibrio desulfuricans subsp. desulfuricans str. ATCC 27774.</title>
        <authorList>
            <consortium name="US DOE Joint Genome Institute"/>
            <person name="Lucas S."/>
            <person name="Copeland A."/>
            <person name="Lapidus A."/>
            <person name="Glavina del Rio T."/>
            <person name="Tice H."/>
            <person name="Bruce D."/>
            <person name="Goodwin L."/>
            <person name="Pitluck S."/>
            <person name="Sims D."/>
            <person name="Lu M."/>
            <person name="Kiss H."/>
            <person name="Meineke L."/>
            <person name="Brettin T."/>
            <person name="Detter J.C."/>
            <person name="Han C."/>
            <person name="Larimer F."/>
            <person name="Land M."/>
            <person name="Hauser L."/>
            <person name="Kyrpides N."/>
            <person name="Ovchinnikova G."/>
            <person name="Hazen T.C."/>
        </authorList>
    </citation>
    <scope>NUCLEOTIDE SEQUENCE [LARGE SCALE GENOMIC DNA]</scope>
    <source>
        <strain>ATCC 27774 / DSM 6949 / MB</strain>
    </source>
</reference>
<dbReference type="EC" id="4.2.1.33" evidence="1"/>
<dbReference type="EMBL" id="CP001358">
    <property type="protein sequence ID" value="ACL48418.1"/>
    <property type="molecule type" value="Genomic_DNA"/>
</dbReference>
<dbReference type="SMR" id="B8J4G0"/>
<dbReference type="STRING" id="525146.Ddes_0507"/>
<dbReference type="KEGG" id="dds:Ddes_0507"/>
<dbReference type="eggNOG" id="COG0066">
    <property type="taxonomic scope" value="Bacteria"/>
</dbReference>
<dbReference type="HOGENOM" id="CLU_081378_1_1_7"/>
<dbReference type="UniPathway" id="UPA00048">
    <property type="reaction ID" value="UER00071"/>
</dbReference>
<dbReference type="GO" id="GO:0003861">
    <property type="term" value="F:3-isopropylmalate dehydratase activity"/>
    <property type="evidence" value="ECO:0007669"/>
    <property type="project" value="UniProtKB-UniRule"/>
</dbReference>
<dbReference type="GO" id="GO:0009098">
    <property type="term" value="P:L-leucine biosynthetic process"/>
    <property type="evidence" value="ECO:0007669"/>
    <property type="project" value="UniProtKB-UniRule"/>
</dbReference>
<dbReference type="CDD" id="cd01577">
    <property type="entry name" value="IPMI_Swivel"/>
    <property type="match status" value="1"/>
</dbReference>
<dbReference type="Gene3D" id="3.20.19.10">
    <property type="entry name" value="Aconitase, domain 4"/>
    <property type="match status" value="1"/>
</dbReference>
<dbReference type="HAMAP" id="MF_01032">
    <property type="entry name" value="LeuD_type2"/>
    <property type="match status" value="1"/>
</dbReference>
<dbReference type="InterPro" id="IPR015928">
    <property type="entry name" value="Aconitase/3IPM_dehydase_swvl"/>
</dbReference>
<dbReference type="InterPro" id="IPR000573">
    <property type="entry name" value="AconitaseA/IPMdHydase_ssu_swvl"/>
</dbReference>
<dbReference type="InterPro" id="IPR033940">
    <property type="entry name" value="IPMI_Swivel"/>
</dbReference>
<dbReference type="InterPro" id="IPR050075">
    <property type="entry name" value="LeuD"/>
</dbReference>
<dbReference type="InterPro" id="IPR011827">
    <property type="entry name" value="LeuD_type2/HacB/DmdB"/>
</dbReference>
<dbReference type="NCBIfam" id="TIGR02087">
    <property type="entry name" value="LEUD_arch"/>
    <property type="match status" value="1"/>
</dbReference>
<dbReference type="PANTHER" id="PTHR43345:SF2">
    <property type="entry name" value="3-ISOPROPYLMALATE DEHYDRATASE SMALL SUBUNIT 1"/>
    <property type="match status" value="1"/>
</dbReference>
<dbReference type="PANTHER" id="PTHR43345">
    <property type="entry name" value="3-ISOPROPYLMALATE DEHYDRATASE SMALL SUBUNIT 2-RELATED-RELATED"/>
    <property type="match status" value="1"/>
</dbReference>
<dbReference type="Pfam" id="PF00694">
    <property type="entry name" value="Aconitase_C"/>
    <property type="match status" value="1"/>
</dbReference>
<dbReference type="SUPFAM" id="SSF52016">
    <property type="entry name" value="LeuD/IlvD-like"/>
    <property type="match status" value="1"/>
</dbReference>
<proteinExistence type="inferred from homology"/>
<protein>
    <recommendedName>
        <fullName evidence="1">3-isopropylmalate dehydratase small subunit</fullName>
        <ecNumber evidence="1">4.2.1.33</ecNumber>
    </recommendedName>
    <alternativeName>
        <fullName evidence="1">Alpha-IPM isomerase</fullName>
        <shortName evidence="1">IPMI</shortName>
    </alternativeName>
    <alternativeName>
        <fullName evidence="1">Isopropylmalate isomerase</fullName>
    </alternativeName>
</protein>
<gene>
    <name evidence="1" type="primary">leuD</name>
    <name type="ordered locus">Ddes_0507</name>
</gene>
<organism>
    <name type="scientific">Desulfovibrio desulfuricans (strain ATCC 27774 / DSM 6949 / MB)</name>
    <dbReference type="NCBI Taxonomy" id="525146"/>
    <lineage>
        <taxon>Bacteria</taxon>
        <taxon>Pseudomonadati</taxon>
        <taxon>Thermodesulfobacteriota</taxon>
        <taxon>Desulfovibrionia</taxon>
        <taxon>Desulfovibrionales</taxon>
        <taxon>Desulfovibrionaceae</taxon>
        <taxon>Desulfovibrio</taxon>
    </lineage>
</organism>
<name>LEUD_DESDA</name>
<comment type="function">
    <text evidence="1">Catalyzes the isomerization between 2-isopropylmalate and 3-isopropylmalate, via the formation of 2-isopropylmaleate.</text>
</comment>
<comment type="catalytic activity">
    <reaction evidence="1">
        <text>(2R,3S)-3-isopropylmalate = (2S)-2-isopropylmalate</text>
        <dbReference type="Rhea" id="RHEA:32287"/>
        <dbReference type="ChEBI" id="CHEBI:1178"/>
        <dbReference type="ChEBI" id="CHEBI:35121"/>
        <dbReference type="EC" id="4.2.1.33"/>
    </reaction>
</comment>
<comment type="pathway">
    <text evidence="1">Amino-acid biosynthesis; L-leucine biosynthesis; L-leucine from 3-methyl-2-oxobutanoate: step 2/4.</text>
</comment>
<comment type="subunit">
    <text evidence="1">Heterodimer of LeuC and LeuD.</text>
</comment>
<comment type="similarity">
    <text evidence="1">Belongs to the LeuD family. LeuD type 2 subfamily.</text>
</comment>
<feature type="chain" id="PRO_1000213364" description="3-isopropylmalate dehydratase small subunit">
    <location>
        <begin position="1"/>
        <end position="165"/>
    </location>
</feature>
<evidence type="ECO:0000255" key="1">
    <source>
        <dbReference type="HAMAP-Rule" id="MF_01032"/>
    </source>
</evidence>
<keyword id="KW-0028">Amino-acid biosynthesis</keyword>
<keyword id="KW-0100">Branched-chain amino acid biosynthesis</keyword>
<keyword id="KW-0432">Leucine biosynthesis</keyword>
<keyword id="KW-0456">Lyase</keyword>
<accession>B8J4G0</accession>